<protein>
    <recommendedName>
        <fullName evidence="2">tRNA (guanine-N(7)-)-methyltransferase</fullName>
        <ecNumber evidence="2">2.1.1.33</ecNumber>
    </recommendedName>
    <alternativeName>
        <fullName evidence="2">tRNA (guanine(46)-N(7))-methyltransferase</fullName>
    </alternativeName>
    <alternativeName>
        <fullName evidence="2">tRNA(m7G46)-methyltransferase</fullName>
    </alternativeName>
</protein>
<proteinExistence type="inferred from homology"/>
<accession>B8DHC7</accession>
<evidence type="ECO:0000250" key="1"/>
<evidence type="ECO:0000255" key="2">
    <source>
        <dbReference type="HAMAP-Rule" id="MF_01057"/>
    </source>
</evidence>
<organism>
    <name type="scientific">Listeria monocytogenes serotype 4a (strain HCC23)</name>
    <dbReference type="NCBI Taxonomy" id="552536"/>
    <lineage>
        <taxon>Bacteria</taxon>
        <taxon>Bacillati</taxon>
        <taxon>Bacillota</taxon>
        <taxon>Bacilli</taxon>
        <taxon>Bacillales</taxon>
        <taxon>Listeriaceae</taxon>
        <taxon>Listeria</taxon>
    </lineage>
</organism>
<sequence>MRVKHKPWAKDRLEEFPAIYIKNPEDFKGQWQEVFGNNNPIHIEIGSGKGQFISGMAKANPEINYIGIEMIESVLVSALDKAIEADVPNLRLVARDAKLLEECFEKGEVAQIYLNFSDPWPKKRHTKRRLTNPTFLTIYERLLPKAGEIHFKTDNRSLFEYSLVAFSEYNMLLTFVSLDLHNSDYEGNIKTEYEEKFSAKGFPIYRLEAKFDRN</sequence>
<comment type="function">
    <text evidence="2">Catalyzes the formation of N(7)-methylguanine at position 46 (m7G46) in tRNA.</text>
</comment>
<comment type="catalytic activity">
    <reaction evidence="2">
        <text>guanosine(46) in tRNA + S-adenosyl-L-methionine = N(7)-methylguanosine(46) in tRNA + S-adenosyl-L-homocysteine</text>
        <dbReference type="Rhea" id="RHEA:42708"/>
        <dbReference type="Rhea" id="RHEA-COMP:10188"/>
        <dbReference type="Rhea" id="RHEA-COMP:10189"/>
        <dbReference type="ChEBI" id="CHEBI:57856"/>
        <dbReference type="ChEBI" id="CHEBI:59789"/>
        <dbReference type="ChEBI" id="CHEBI:74269"/>
        <dbReference type="ChEBI" id="CHEBI:74480"/>
        <dbReference type="EC" id="2.1.1.33"/>
    </reaction>
</comment>
<comment type="pathway">
    <text evidence="2">tRNA modification; N(7)-methylguanine-tRNA biosynthesis.</text>
</comment>
<comment type="similarity">
    <text evidence="2">Belongs to the class I-like SAM-binding methyltransferase superfamily. TrmB family.</text>
</comment>
<reference key="1">
    <citation type="journal article" date="2011" name="J. Bacteriol.">
        <title>Genome sequence of lineage III Listeria monocytogenes strain HCC23.</title>
        <authorList>
            <person name="Steele C.L."/>
            <person name="Donaldson J.R."/>
            <person name="Paul D."/>
            <person name="Banes M.M."/>
            <person name="Arick T."/>
            <person name="Bridges S.M."/>
            <person name="Lawrence M.L."/>
        </authorList>
    </citation>
    <scope>NUCLEOTIDE SEQUENCE [LARGE SCALE GENOMIC DNA]</scope>
    <source>
        <strain>HCC23</strain>
    </source>
</reference>
<name>TRMB_LISMH</name>
<feature type="chain" id="PRO_1000149656" description="tRNA (guanine-N(7)-)-methyltransferase">
    <location>
        <begin position="1"/>
        <end position="214"/>
    </location>
</feature>
<feature type="active site" evidence="1">
    <location>
        <position position="118"/>
    </location>
</feature>
<feature type="binding site" evidence="2">
    <location>
        <position position="44"/>
    </location>
    <ligand>
        <name>S-adenosyl-L-methionine</name>
        <dbReference type="ChEBI" id="CHEBI:59789"/>
    </ligand>
</feature>
<feature type="binding site" evidence="2">
    <location>
        <position position="69"/>
    </location>
    <ligand>
        <name>S-adenosyl-L-methionine</name>
        <dbReference type="ChEBI" id="CHEBI:59789"/>
    </ligand>
</feature>
<feature type="binding site" evidence="2">
    <location>
        <position position="96"/>
    </location>
    <ligand>
        <name>S-adenosyl-L-methionine</name>
        <dbReference type="ChEBI" id="CHEBI:59789"/>
    </ligand>
</feature>
<feature type="binding site" evidence="2">
    <location>
        <position position="118"/>
    </location>
    <ligand>
        <name>S-adenosyl-L-methionine</name>
        <dbReference type="ChEBI" id="CHEBI:59789"/>
    </ligand>
</feature>
<feature type="binding site" evidence="2">
    <location>
        <position position="122"/>
    </location>
    <ligand>
        <name>substrate</name>
    </ligand>
</feature>
<feature type="binding site" evidence="2">
    <location>
        <position position="154"/>
    </location>
    <ligand>
        <name>substrate</name>
    </ligand>
</feature>
<feature type="binding site" evidence="2">
    <location>
        <begin position="191"/>
        <end position="194"/>
    </location>
    <ligand>
        <name>substrate</name>
    </ligand>
</feature>
<gene>
    <name evidence="2" type="primary">trmB</name>
    <name type="ordered locus">LMHCC_0948</name>
</gene>
<dbReference type="EC" id="2.1.1.33" evidence="2"/>
<dbReference type="EMBL" id="CP001175">
    <property type="protein sequence ID" value="ACK39296.1"/>
    <property type="molecule type" value="Genomic_DNA"/>
</dbReference>
<dbReference type="RefSeq" id="WP_012581232.1">
    <property type="nucleotide sequence ID" value="NC_011660.1"/>
</dbReference>
<dbReference type="SMR" id="B8DHC7"/>
<dbReference type="KEGG" id="lmh:LMHCC_0948"/>
<dbReference type="HOGENOM" id="CLU_050910_2_1_9"/>
<dbReference type="UniPathway" id="UPA00989"/>
<dbReference type="GO" id="GO:0043527">
    <property type="term" value="C:tRNA methyltransferase complex"/>
    <property type="evidence" value="ECO:0007669"/>
    <property type="project" value="TreeGrafter"/>
</dbReference>
<dbReference type="GO" id="GO:0008176">
    <property type="term" value="F:tRNA (guanine(46)-N7)-methyltransferase activity"/>
    <property type="evidence" value="ECO:0007669"/>
    <property type="project" value="UniProtKB-UniRule"/>
</dbReference>
<dbReference type="CDD" id="cd02440">
    <property type="entry name" value="AdoMet_MTases"/>
    <property type="match status" value="1"/>
</dbReference>
<dbReference type="FunFam" id="3.40.50.150:FF:000035">
    <property type="entry name" value="tRNA (guanine-N(7)-)-methyltransferase"/>
    <property type="match status" value="1"/>
</dbReference>
<dbReference type="Gene3D" id="3.40.50.150">
    <property type="entry name" value="Vaccinia Virus protein VP39"/>
    <property type="match status" value="1"/>
</dbReference>
<dbReference type="HAMAP" id="MF_01057">
    <property type="entry name" value="tRNA_methyltr_TrmB"/>
    <property type="match status" value="1"/>
</dbReference>
<dbReference type="InterPro" id="IPR029063">
    <property type="entry name" value="SAM-dependent_MTases_sf"/>
</dbReference>
<dbReference type="InterPro" id="IPR003358">
    <property type="entry name" value="tRNA_(Gua-N-7)_MeTrfase_Trmb"/>
</dbReference>
<dbReference type="InterPro" id="IPR055361">
    <property type="entry name" value="tRNA_methyltr_TrmB_bact"/>
</dbReference>
<dbReference type="NCBIfam" id="NF001080">
    <property type="entry name" value="PRK00121.2-2"/>
    <property type="match status" value="1"/>
</dbReference>
<dbReference type="NCBIfam" id="TIGR00091">
    <property type="entry name" value="tRNA (guanosine(46)-N7)-methyltransferase TrmB"/>
    <property type="match status" value="1"/>
</dbReference>
<dbReference type="PANTHER" id="PTHR23417">
    <property type="entry name" value="3-DEOXY-D-MANNO-OCTULOSONIC-ACID TRANSFERASE/TRNA GUANINE-N 7 - -METHYLTRANSFERASE"/>
    <property type="match status" value="1"/>
</dbReference>
<dbReference type="PANTHER" id="PTHR23417:SF14">
    <property type="entry name" value="PENTACOTRIPEPTIDE-REPEAT REGION OF PRORP DOMAIN-CONTAINING PROTEIN"/>
    <property type="match status" value="1"/>
</dbReference>
<dbReference type="Pfam" id="PF02390">
    <property type="entry name" value="Methyltransf_4"/>
    <property type="match status" value="1"/>
</dbReference>
<dbReference type="SUPFAM" id="SSF53335">
    <property type="entry name" value="S-adenosyl-L-methionine-dependent methyltransferases"/>
    <property type="match status" value="1"/>
</dbReference>
<dbReference type="PROSITE" id="PS51625">
    <property type="entry name" value="SAM_MT_TRMB"/>
    <property type="match status" value="1"/>
</dbReference>
<keyword id="KW-0489">Methyltransferase</keyword>
<keyword id="KW-0949">S-adenosyl-L-methionine</keyword>
<keyword id="KW-0808">Transferase</keyword>
<keyword id="KW-0819">tRNA processing</keyword>